<organism>
    <name type="scientific">Escherichia coli (strain 55989 / EAEC)</name>
    <dbReference type="NCBI Taxonomy" id="585055"/>
    <lineage>
        <taxon>Bacteria</taxon>
        <taxon>Pseudomonadati</taxon>
        <taxon>Pseudomonadota</taxon>
        <taxon>Gammaproteobacteria</taxon>
        <taxon>Enterobacterales</taxon>
        <taxon>Enterobacteriaceae</taxon>
        <taxon>Escherichia</taxon>
    </lineage>
</organism>
<reference key="1">
    <citation type="journal article" date="2009" name="PLoS Genet.">
        <title>Organised genome dynamics in the Escherichia coli species results in highly diverse adaptive paths.</title>
        <authorList>
            <person name="Touchon M."/>
            <person name="Hoede C."/>
            <person name="Tenaillon O."/>
            <person name="Barbe V."/>
            <person name="Baeriswyl S."/>
            <person name="Bidet P."/>
            <person name="Bingen E."/>
            <person name="Bonacorsi S."/>
            <person name="Bouchier C."/>
            <person name="Bouvet O."/>
            <person name="Calteau A."/>
            <person name="Chiapello H."/>
            <person name="Clermont O."/>
            <person name="Cruveiller S."/>
            <person name="Danchin A."/>
            <person name="Diard M."/>
            <person name="Dossat C."/>
            <person name="Karoui M.E."/>
            <person name="Frapy E."/>
            <person name="Garry L."/>
            <person name="Ghigo J.M."/>
            <person name="Gilles A.M."/>
            <person name="Johnson J."/>
            <person name="Le Bouguenec C."/>
            <person name="Lescat M."/>
            <person name="Mangenot S."/>
            <person name="Martinez-Jehanne V."/>
            <person name="Matic I."/>
            <person name="Nassif X."/>
            <person name="Oztas S."/>
            <person name="Petit M.A."/>
            <person name="Pichon C."/>
            <person name="Rouy Z."/>
            <person name="Ruf C.S."/>
            <person name="Schneider D."/>
            <person name="Tourret J."/>
            <person name="Vacherie B."/>
            <person name="Vallenet D."/>
            <person name="Medigue C."/>
            <person name="Rocha E.P.C."/>
            <person name="Denamur E."/>
        </authorList>
    </citation>
    <scope>NUCLEOTIDE SEQUENCE [LARGE SCALE GENOMIC DNA]</scope>
    <source>
        <strain>55989 / EAEC</strain>
    </source>
</reference>
<feature type="chain" id="PRO_1000192545" description="Replication restart protein PriB">
    <location>
        <begin position="1"/>
        <end position="104"/>
    </location>
</feature>
<feature type="domain" description="SSB" evidence="1">
    <location>
        <begin position="1"/>
        <end position="101"/>
    </location>
</feature>
<proteinExistence type="inferred from homology"/>
<dbReference type="EMBL" id="CU928145">
    <property type="protein sequence ID" value="CAV01700.1"/>
    <property type="molecule type" value="Genomic_DNA"/>
</dbReference>
<dbReference type="RefSeq" id="WP_001296681.1">
    <property type="nucleotide sequence ID" value="NZ_CP028304.1"/>
</dbReference>
<dbReference type="SMR" id="B7LCR2"/>
<dbReference type="GeneID" id="93777622"/>
<dbReference type="KEGG" id="eck:EC55989_4759"/>
<dbReference type="HOGENOM" id="CLU_166075_0_0_6"/>
<dbReference type="Proteomes" id="UP000000746">
    <property type="component" value="Chromosome"/>
</dbReference>
<dbReference type="GO" id="GO:1990077">
    <property type="term" value="C:primosome complex"/>
    <property type="evidence" value="ECO:0007669"/>
    <property type="project" value="UniProtKB-KW"/>
</dbReference>
<dbReference type="GO" id="GO:0003697">
    <property type="term" value="F:single-stranded DNA binding"/>
    <property type="evidence" value="ECO:0007669"/>
    <property type="project" value="UniProtKB-UniRule"/>
</dbReference>
<dbReference type="GO" id="GO:0006269">
    <property type="term" value="P:DNA replication, synthesis of primer"/>
    <property type="evidence" value="ECO:0007669"/>
    <property type="project" value="UniProtKB-KW"/>
</dbReference>
<dbReference type="CDD" id="cd04496">
    <property type="entry name" value="SSB_OBF"/>
    <property type="match status" value="1"/>
</dbReference>
<dbReference type="FunFam" id="2.40.50.140:FF:000077">
    <property type="entry name" value="Primosomal replication protein N"/>
    <property type="match status" value="1"/>
</dbReference>
<dbReference type="Gene3D" id="2.40.50.140">
    <property type="entry name" value="Nucleic acid-binding proteins"/>
    <property type="match status" value="1"/>
</dbReference>
<dbReference type="HAMAP" id="MF_00720">
    <property type="entry name" value="PriB"/>
    <property type="match status" value="1"/>
</dbReference>
<dbReference type="InterPro" id="IPR012340">
    <property type="entry name" value="NA-bd_OB-fold"/>
</dbReference>
<dbReference type="InterPro" id="IPR000424">
    <property type="entry name" value="Primosome_PriB/ssb"/>
</dbReference>
<dbReference type="InterPro" id="IPR023646">
    <property type="entry name" value="Prisomal_replication_PriB"/>
</dbReference>
<dbReference type="NCBIfam" id="TIGR04418">
    <property type="entry name" value="PriB_gamma"/>
    <property type="match status" value="1"/>
</dbReference>
<dbReference type="Pfam" id="PF22657">
    <property type="entry name" value="SSB_1"/>
    <property type="match status" value="1"/>
</dbReference>
<dbReference type="PIRSF" id="PIRSF003135">
    <property type="entry name" value="Primosomal_n"/>
    <property type="match status" value="1"/>
</dbReference>
<dbReference type="SUPFAM" id="SSF50249">
    <property type="entry name" value="Nucleic acid-binding proteins"/>
    <property type="match status" value="1"/>
</dbReference>
<dbReference type="PROSITE" id="PS50935">
    <property type="entry name" value="SSB"/>
    <property type="match status" value="1"/>
</dbReference>
<protein>
    <recommendedName>
        <fullName evidence="1">Replication restart protein PriB</fullName>
    </recommendedName>
</protein>
<keyword id="KW-0235">DNA replication</keyword>
<keyword id="KW-0238">DNA-binding</keyword>
<keyword id="KW-0639">Primosome</keyword>
<keyword id="KW-1185">Reference proteome</keyword>
<name>PRIB_ECO55</name>
<accession>B7LCR2</accession>
<sequence length="104" mass="11472">MTNRLVLSGTVCRTPLRKVSPSGIPHCQFVLEHRSVQEEAGFHRQAWCQMPVIVSGHENQAITHSITVGSRITVQGFISCHKAKNGLSKMVLHAEQIELIDSGD</sequence>
<gene>
    <name evidence="1" type="primary">priB</name>
    <name type="ordered locus">EC55989_4759</name>
</gene>
<evidence type="ECO:0000255" key="1">
    <source>
        <dbReference type="HAMAP-Rule" id="MF_00720"/>
    </source>
</evidence>
<comment type="function">
    <text evidence="1">Involved in the restart of stalled replication forks, which reloads the replicative helicase on sites other than the origin of replication; the PriA-PriB pathway is the major replication restart pathway. During primosome assembly it facilitates complex formation between PriA and DnaT on DNA; stabilizes PriA on DNA. Stimulates the DNA unwinding activity of PriA helicase.</text>
</comment>
<comment type="subunit">
    <text evidence="1">Homodimer. Interacts with PriA and DnaT. Component of the replication restart primosome. Primosome assembly occurs via a 'hand-off' mechanism. PriA binds to replication forks, subsequently PriB then DnaT bind; DnaT then displaces ssDNA to generate the helicase loading substrate.</text>
</comment>
<comment type="similarity">
    <text evidence="1">Belongs to the PriB family.</text>
</comment>